<sequence length="104" mass="11736">MHLTPREQEKLLIVVAADLARRRKDRGIRLNHPEAVAYITAEILEGAREGRTVTDLMAYGTTLLTYDDVMEGVPEMIRAVQVEATFPDGTKLVSVHDPIRRRLP</sequence>
<gene>
    <name evidence="1" type="primary">ureA</name>
</gene>
<keyword id="KW-0963">Cytoplasm</keyword>
<keyword id="KW-0378">Hydrolase</keyword>
<reference key="1">
    <citation type="journal article" date="1999" name="Infect. Immun.">
        <title>Genetic and physiologic characterization of urease of Actinomyces naeslundii.</title>
        <authorList>
            <person name="Morou-Bermudez E."/>
            <person name="Burne R.A."/>
        </authorList>
    </citation>
    <scope>NUCLEOTIDE SEQUENCE [GENOMIC DNA]</scope>
    <source>
        <strain>WVU45</strain>
    </source>
</reference>
<feature type="chain" id="PRO_0000097984" description="Urease subunit gamma">
    <location>
        <begin position="1"/>
        <end position="104"/>
    </location>
</feature>
<dbReference type="EC" id="3.5.1.5" evidence="1"/>
<dbReference type="EMBL" id="AF056321">
    <property type="protein sequence ID" value="AAD13730.1"/>
    <property type="molecule type" value="Genomic_DNA"/>
</dbReference>
<dbReference type="EMBL" id="AF048778">
    <property type="protein sequence ID" value="AAD13723.1"/>
    <property type="molecule type" value="Genomic_DNA"/>
</dbReference>
<dbReference type="RefSeq" id="WP_003782040.1">
    <property type="nucleotide sequence ID" value="NZ_PKKP01000002.1"/>
</dbReference>
<dbReference type="SMR" id="Q9Z395"/>
<dbReference type="STRING" id="1655.BKH10_09500"/>
<dbReference type="OrthoDB" id="9797217at2"/>
<dbReference type="BRENDA" id="3.5.1.5">
    <property type="organism ID" value="134"/>
</dbReference>
<dbReference type="UniPathway" id="UPA00258">
    <property type="reaction ID" value="UER00370"/>
</dbReference>
<dbReference type="GO" id="GO:0005737">
    <property type="term" value="C:cytoplasm"/>
    <property type="evidence" value="ECO:0007669"/>
    <property type="project" value="UniProtKB-SubCell"/>
</dbReference>
<dbReference type="GO" id="GO:0016151">
    <property type="term" value="F:nickel cation binding"/>
    <property type="evidence" value="ECO:0007669"/>
    <property type="project" value="InterPro"/>
</dbReference>
<dbReference type="GO" id="GO:0009039">
    <property type="term" value="F:urease activity"/>
    <property type="evidence" value="ECO:0007669"/>
    <property type="project" value="UniProtKB-UniRule"/>
</dbReference>
<dbReference type="GO" id="GO:0043419">
    <property type="term" value="P:urea catabolic process"/>
    <property type="evidence" value="ECO:0007669"/>
    <property type="project" value="UniProtKB-UniRule"/>
</dbReference>
<dbReference type="CDD" id="cd00390">
    <property type="entry name" value="Urease_gamma"/>
    <property type="match status" value="1"/>
</dbReference>
<dbReference type="Gene3D" id="3.30.280.10">
    <property type="entry name" value="Urease, gamma-like subunit"/>
    <property type="match status" value="1"/>
</dbReference>
<dbReference type="HAMAP" id="MF_00739">
    <property type="entry name" value="Urease_gamma"/>
    <property type="match status" value="1"/>
</dbReference>
<dbReference type="InterPro" id="IPR012010">
    <property type="entry name" value="Urease_gamma"/>
</dbReference>
<dbReference type="InterPro" id="IPR002026">
    <property type="entry name" value="Urease_gamma/gamma-beta_su"/>
</dbReference>
<dbReference type="InterPro" id="IPR036463">
    <property type="entry name" value="Urease_gamma_sf"/>
</dbReference>
<dbReference type="InterPro" id="IPR050069">
    <property type="entry name" value="Urease_subunit"/>
</dbReference>
<dbReference type="NCBIfam" id="NF009712">
    <property type="entry name" value="PRK13241.1"/>
    <property type="match status" value="1"/>
</dbReference>
<dbReference type="NCBIfam" id="TIGR00193">
    <property type="entry name" value="urease_gam"/>
    <property type="match status" value="1"/>
</dbReference>
<dbReference type="PANTHER" id="PTHR33569">
    <property type="entry name" value="UREASE"/>
    <property type="match status" value="1"/>
</dbReference>
<dbReference type="PANTHER" id="PTHR33569:SF1">
    <property type="entry name" value="UREASE"/>
    <property type="match status" value="1"/>
</dbReference>
<dbReference type="Pfam" id="PF00547">
    <property type="entry name" value="Urease_gamma"/>
    <property type="match status" value="1"/>
</dbReference>
<dbReference type="PIRSF" id="PIRSF001223">
    <property type="entry name" value="Urease_gamma"/>
    <property type="match status" value="1"/>
</dbReference>
<dbReference type="SUPFAM" id="SSF54111">
    <property type="entry name" value="Urease, gamma-subunit"/>
    <property type="match status" value="1"/>
</dbReference>
<name>URE3_ACTNA</name>
<comment type="catalytic activity">
    <reaction evidence="1">
        <text>urea + 2 H2O + H(+) = hydrogencarbonate + 2 NH4(+)</text>
        <dbReference type="Rhea" id="RHEA:20557"/>
        <dbReference type="ChEBI" id="CHEBI:15377"/>
        <dbReference type="ChEBI" id="CHEBI:15378"/>
        <dbReference type="ChEBI" id="CHEBI:16199"/>
        <dbReference type="ChEBI" id="CHEBI:17544"/>
        <dbReference type="ChEBI" id="CHEBI:28938"/>
        <dbReference type="EC" id="3.5.1.5"/>
    </reaction>
</comment>
<comment type="pathway">
    <text evidence="1">Nitrogen metabolism; urea degradation; CO(2) and NH(3) from urea (urease route): step 1/1.</text>
</comment>
<comment type="subunit">
    <text evidence="1">Heterotrimer of UreA (gamma), UreB (beta) and UreC (alpha) subunits. Three heterotrimers associate to form the active enzyme.</text>
</comment>
<comment type="subcellular location">
    <subcellularLocation>
        <location evidence="1">Cytoplasm</location>
    </subcellularLocation>
</comment>
<comment type="similarity">
    <text evidence="1">Belongs to the urease gamma subunit family.</text>
</comment>
<proteinExistence type="inferred from homology"/>
<evidence type="ECO:0000255" key="1">
    <source>
        <dbReference type="HAMAP-Rule" id="MF_00739"/>
    </source>
</evidence>
<accession>Q9Z395</accession>
<protein>
    <recommendedName>
        <fullName evidence="1">Urease subunit gamma</fullName>
        <ecNumber evidence="1">3.5.1.5</ecNumber>
    </recommendedName>
    <alternativeName>
        <fullName evidence="1">Urea amidohydrolase subunit gamma</fullName>
    </alternativeName>
</protein>
<organism>
    <name type="scientific">Actinomyces naeslundii</name>
    <dbReference type="NCBI Taxonomy" id="1655"/>
    <lineage>
        <taxon>Bacteria</taxon>
        <taxon>Bacillati</taxon>
        <taxon>Actinomycetota</taxon>
        <taxon>Actinomycetes</taxon>
        <taxon>Actinomycetales</taxon>
        <taxon>Actinomycetaceae</taxon>
        <taxon>Actinomyces</taxon>
    </lineage>
</organism>